<proteinExistence type="evidence at protein level"/>
<keyword id="KW-0002">3D-structure</keyword>
<keyword id="KW-0945">Host-virus interaction</keyword>
<keyword id="KW-1090">Inhibition of host innate immune response by virus</keyword>
<keyword id="KW-1114">Inhibition of host interferon signaling pathway by virus</keyword>
<keyword id="KW-1106">Inhibition of host STAT2 by virus</keyword>
<keyword id="KW-0922">Interferon antiviral system evasion</keyword>
<keyword id="KW-1185">Reference proteome</keyword>
<keyword id="KW-0899">Viral immunoevasion</keyword>
<name>UL145_HCMVM</name>
<feature type="chain" id="PRO_0000418329" description="Protein UL145">
    <location>
        <begin position="1"/>
        <end position="130"/>
    </location>
</feature>
<feature type="mutagenesis site" description="Complete loss of host DDB1 binding." evidence="2">
    <original>L</original>
    <variation>A</variation>
    <location>
        <position position="30"/>
    </location>
</feature>
<feature type="mutagenesis site" description="Complete loss of host DDB1 binding." evidence="2">
    <original>R</original>
    <variation>A</variation>
    <location>
        <position position="33"/>
    </location>
</feature>
<feature type="mutagenesis site" description="Complete loss of host DDB1 binding." evidence="1 2">
    <original>R</original>
    <variation>A</variation>
    <location>
        <position position="35"/>
    </location>
</feature>
<feature type="helix" evidence="3">
    <location>
        <begin position="26"/>
        <end position="35"/>
    </location>
</feature>
<evidence type="ECO:0000269" key="1">
    <source>
    </source>
</evidence>
<evidence type="ECO:0000269" key="2">
    <source>
    </source>
</evidence>
<evidence type="ECO:0007829" key="3">
    <source>
        <dbReference type="PDB" id="7UKN"/>
    </source>
</evidence>
<dbReference type="EMBL" id="AY446894">
    <property type="protein sequence ID" value="AAR31676.1"/>
    <property type="molecule type" value="Genomic_DNA"/>
</dbReference>
<dbReference type="RefSeq" id="YP_081572.1">
    <property type="nucleotide sequence ID" value="NC_006273.2"/>
</dbReference>
<dbReference type="PDB" id="7UKN">
    <property type="method" value="X-ray"/>
    <property type="resolution" value="2.90 A"/>
    <property type="chains" value="B=25-37"/>
</dbReference>
<dbReference type="PDBsum" id="7UKN"/>
<dbReference type="SMR" id="F5HF44"/>
<dbReference type="BioGRID" id="1677969">
    <property type="interactions" value="1"/>
</dbReference>
<dbReference type="DNASU" id="3077415"/>
<dbReference type="GeneID" id="3077415"/>
<dbReference type="KEGG" id="vg:3077415"/>
<dbReference type="Proteomes" id="UP000000938">
    <property type="component" value="Segment"/>
</dbReference>
<dbReference type="GO" id="GO:0042025">
    <property type="term" value="C:host cell nucleus"/>
    <property type="evidence" value="ECO:0000305"/>
    <property type="project" value="UniProt"/>
</dbReference>
<dbReference type="GO" id="GO:1990756">
    <property type="term" value="F:ubiquitin-like ligase-substrate adaptor activity"/>
    <property type="evidence" value="ECO:0000314"/>
    <property type="project" value="UniProt"/>
</dbReference>
<dbReference type="GO" id="GO:0052170">
    <property type="term" value="P:symbiont-mediated suppression of host innate immune response"/>
    <property type="evidence" value="ECO:0007669"/>
    <property type="project" value="UniProtKB-KW"/>
</dbReference>
<dbReference type="GO" id="GO:0039564">
    <property type="term" value="P:symbiont-mediated suppression of host JAK-STAT cascade via inhibition of STAT2 activity"/>
    <property type="evidence" value="ECO:0000314"/>
    <property type="project" value="UniProt"/>
</dbReference>
<dbReference type="GO" id="GO:0039502">
    <property type="term" value="P:symbiont-mediated suppression of host type I interferon-mediated signaling pathway"/>
    <property type="evidence" value="ECO:0007669"/>
    <property type="project" value="UniProtKB-KW"/>
</dbReference>
<reference key="1">
    <citation type="journal article" date="2004" name="J. Gen. Virol.">
        <title>Genetic content of wild-type human cytomegalovirus.</title>
        <authorList>
            <person name="Dolan A."/>
            <person name="Cunningham C."/>
            <person name="Hector R.D."/>
            <person name="Hassan-Walker A.F."/>
            <person name="Lee L."/>
            <person name="Addison C."/>
            <person name="Dargan D.J."/>
            <person name="McGeoch D.J."/>
            <person name="Gatherer D."/>
            <person name="Emery V.C."/>
            <person name="Griffiths P.D."/>
            <person name="Sinzger C."/>
            <person name="McSharry B.P."/>
            <person name="Wilkinson G.W.G."/>
            <person name="Davison A.J."/>
        </authorList>
    </citation>
    <scope>NUCLEOTIDE SEQUENCE [LARGE SCALE GENOMIC DNA]</scope>
</reference>
<reference key="2">
    <citation type="journal article" date="2020" name="Cell Rep.">
        <title>The Human Cytomegalovirus pUL145 Isoforms Act as Viral DDB1-Cullin-Associated Factors to Instruct Host Protein Degradation to Impede Innate Immunity.</title>
        <authorList>
            <person name="Le-Trilling V.T.K."/>
            <person name="Becker T."/>
            <person name="Nachshon A."/>
            <person name="Stern-Ginossar N."/>
            <person name="Schoeler L."/>
            <person name="Voigt S."/>
            <person name="Hengel H."/>
            <person name="Trilling M."/>
        </authorList>
    </citation>
    <scope>FUNCTION</scope>
    <scope>INTERACTION WITH HOST DDB1</scope>
    <scope>MUTAGENESIS OF ARG-35</scope>
</reference>
<reference key="3">
    <citation type="journal article" date="2022" name="J. Virol.">
        <title>Insight into Viral Hijacking of CRL4 Ubiquitin Ligase through Structural Analysis of the pUL145-DDB1 Complex.</title>
        <authorList>
            <person name="Wick E.T."/>
            <person name="Treadway C.J."/>
            <person name="Li Z."/>
            <person name="Nicely N.I."/>
            <person name="Ren Z."/>
            <person name="Baldwin A.S."/>
            <person name="Xiong Y."/>
            <person name="Harrison J.S."/>
            <person name="Brown N.G."/>
        </authorList>
    </citation>
    <scope>FUNCTION</scope>
    <scope>INTERACTION WITH HOST DDB1</scope>
    <scope>MUTAGENESIS OF LEU-30; ARG-33 AND ARG-35</scope>
</reference>
<gene>
    <name type="primary">UL145</name>
</gene>
<organismHost>
    <name type="scientific">Homo sapiens</name>
    <name type="common">Human</name>
    <dbReference type="NCBI Taxonomy" id="9606"/>
</organismHost>
<protein>
    <recommendedName>
        <fullName>Protein UL145</fullName>
    </recommendedName>
</protein>
<organism>
    <name type="scientific">Human cytomegalovirus (strain Merlin)</name>
    <name type="common">HHV-5</name>
    <name type="synonym">Human herpesvirus 5</name>
    <dbReference type="NCBI Taxonomy" id="295027"/>
    <lineage>
        <taxon>Viruses</taxon>
        <taxon>Duplodnaviria</taxon>
        <taxon>Heunggongvirae</taxon>
        <taxon>Peploviricota</taxon>
        <taxon>Herviviricetes</taxon>
        <taxon>Herpesvirales</taxon>
        <taxon>Orthoherpesviridae</taxon>
        <taxon>Betaherpesvirinae</taxon>
        <taxon>Cytomegalovirus</taxon>
        <taxon>Cytomegalovirus humanbeta5</taxon>
        <taxon>Human cytomegalovirus</taxon>
    </lineage>
</organism>
<comment type="function">
    <text evidence="1 2">Plays a role in the inhibition of host innate immunity by exploiting host DDB1-cullin RING ubiquitin ligases (CRLs) (PubMed:32075763, PubMed:35938868). Mechanistically, recruits host DDB1 via a DCAF-like interaction motif to antagonize IFN signaling by STAT2 degradation (PubMed:32075763).</text>
</comment>
<comment type="subunit">
    <text evidence="1 2">Interacts with host DDB1; this interaction promotes STAT2 degradation.</text>
</comment>
<sequence length="130" mass="14625">MYGVLAHYYSFISSPSVMVNFKHHNAVQLLCARTRDGTAGWERLTHHASYHANYGAYAVLMATSQRKSLVLHRYSAVTAVALQLMPVEMLRRLDQSDWVRGAWIVSETFPTSDPKGFWSDDDSPMGGSED</sequence>
<accession>F5HF44</accession>